<evidence type="ECO:0000250" key="1">
    <source>
        <dbReference type="UniProtKB" id="A0A0D4WTV1"/>
    </source>
</evidence>
<evidence type="ECO:0000250" key="2">
    <source>
        <dbReference type="UniProtKB" id="A0A0D4WV12"/>
    </source>
</evidence>
<evidence type="ECO:0000250" key="3">
    <source>
        <dbReference type="UniProtKB" id="P0CE80"/>
    </source>
</evidence>
<evidence type="ECO:0000250" key="4">
    <source>
        <dbReference type="UniProtKB" id="Q4ZFU2"/>
    </source>
</evidence>
<evidence type="ECO:0000250" key="5">
    <source>
        <dbReference type="UniProtKB" id="Q8I914"/>
    </source>
</evidence>
<evidence type="ECO:0000305" key="6"/>
<evidence type="ECO:0000305" key="7">
    <source>
    </source>
</evidence>
<sequence length="161" mass="17957">NNGGRAYIVLSIPNLAHYQLITGFKETLKNKGHPELMDKVGHDFSGNDNIDQVEKAYKKAGVTGHVWQSDGITNCIASFIRGLDRAKKAVANRDSSNGFINKVYYWTVDKYATTREALDAGVDGIMTNYPDVVANVLSESAYKAKFRIATYDDNPWETFKN</sequence>
<dbReference type="EC" id="4.6.1.-" evidence="4"/>
<dbReference type="EMBL" id="AF512956">
    <property type="protein sequence ID" value="AAP46537.1"/>
    <property type="molecule type" value="Genomic_DNA"/>
</dbReference>
<dbReference type="SMR" id="Q7Z1N0"/>
<dbReference type="ArachnoServer" id="AS001207">
    <property type="toxin name" value="Sphingomyelinase D-like LaSicTox alphaclone2 (fragment)"/>
</dbReference>
<dbReference type="GO" id="GO:0005576">
    <property type="term" value="C:extracellular region"/>
    <property type="evidence" value="ECO:0007669"/>
    <property type="project" value="UniProtKB-SubCell"/>
</dbReference>
<dbReference type="GO" id="GO:0016829">
    <property type="term" value="F:lyase activity"/>
    <property type="evidence" value="ECO:0007669"/>
    <property type="project" value="UniProtKB-KW"/>
</dbReference>
<dbReference type="GO" id="GO:0046872">
    <property type="term" value="F:metal ion binding"/>
    <property type="evidence" value="ECO:0007669"/>
    <property type="project" value="UniProtKB-KW"/>
</dbReference>
<dbReference type="GO" id="GO:0008081">
    <property type="term" value="F:phosphoric diester hydrolase activity"/>
    <property type="evidence" value="ECO:0007669"/>
    <property type="project" value="InterPro"/>
</dbReference>
<dbReference type="GO" id="GO:0090729">
    <property type="term" value="F:toxin activity"/>
    <property type="evidence" value="ECO:0007669"/>
    <property type="project" value="UniProtKB-KW"/>
</dbReference>
<dbReference type="GO" id="GO:0031640">
    <property type="term" value="P:killing of cells of another organism"/>
    <property type="evidence" value="ECO:0007669"/>
    <property type="project" value="UniProtKB-KW"/>
</dbReference>
<dbReference type="GO" id="GO:0016042">
    <property type="term" value="P:lipid catabolic process"/>
    <property type="evidence" value="ECO:0007669"/>
    <property type="project" value="UniProtKB-KW"/>
</dbReference>
<dbReference type="Gene3D" id="3.20.20.190">
    <property type="entry name" value="Phosphatidylinositol (PI) phosphodiesterase"/>
    <property type="match status" value="1"/>
</dbReference>
<dbReference type="InterPro" id="IPR017946">
    <property type="entry name" value="PLC-like_Pdiesterase_TIM-brl"/>
</dbReference>
<dbReference type="Pfam" id="PF13653">
    <property type="entry name" value="GDPD_2"/>
    <property type="match status" value="1"/>
</dbReference>
<dbReference type="SUPFAM" id="SSF51695">
    <property type="entry name" value="PLC-like phosphodiesterases"/>
    <property type="match status" value="1"/>
</dbReference>
<keyword id="KW-0204">Cytolysis</keyword>
<keyword id="KW-1061">Dermonecrotic toxin</keyword>
<keyword id="KW-1015">Disulfide bond</keyword>
<keyword id="KW-0354">Hemolysis</keyword>
<keyword id="KW-0442">Lipid degradation</keyword>
<keyword id="KW-0443">Lipid metabolism</keyword>
<keyword id="KW-0456">Lyase</keyword>
<keyword id="KW-0460">Magnesium</keyword>
<keyword id="KW-0479">Metal-binding</keyword>
<keyword id="KW-0964">Secreted</keyword>
<keyword id="KW-0800">Toxin</keyword>
<name>A1X1_LOXAR</name>
<organism>
    <name type="scientific">Loxosceles arizonica</name>
    <name type="common">Arizona brown spider</name>
    <dbReference type="NCBI Taxonomy" id="196454"/>
    <lineage>
        <taxon>Eukaryota</taxon>
        <taxon>Metazoa</taxon>
        <taxon>Ecdysozoa</taxon>
        <taxon>Arthropoda</taxon>
        <taxon>Chelicerata</taxon>
        <taxon>Arachnida</taxon>
        <taxon>Araneae</taxon>
        <taxon>Araneomorphae</taxon>
        <taxon>Haplogynae</taxon>
        <taxon>Scytodoidea</taxon>
        <taxon>Sicariidae</taxon>
        <taxon>Loxosceles</taxon>
    </lineage>
</organism>
<comment type="function">
    <text evidence="1 3">Dermonecrotic toxins cleave the phosphodiester linkage between the phosphate and headgroup of certain phospholipids (sphingolipid and lysolipid substrates), forming an alcohol (often choline) and a cyclic phosphate (By similarity). This toxin acts on sphingomyelin (SM) (By similarity). It may also act on ceramide phosphoethanolamine (CPE), lysophosphatidylcholine (LPC) and lysophosphatidylethanolamine (LPE), but not on lysophosphatidylserine (LPS), and lysophosphatidylglycerol (LPG) (By similarity). It acts by transphosphatidylation, releasing exclusively cyclic phosphate products as second products (By similarity). Induces dermonecrosis, hemolysis, increased vascular permeability, edema, inflammatory response, and platelet aggregation (By similarity).</text>
</comment>
<comment type="catalytic activity">
    <reaction evidence="1">
        <text>an N-(acyl)-sphingosylphosphocholine = an N-(acyl)-sphingosyl-1,3-cyclic phosphate + choline</text>
        <dbReference type="Rhea" id="RHEA:60652"/>
        <dbReference type="ChEBI" id="CHEBI:15354"/>
        <dbReference type="ChEBI" id="CHEBI:64583"/>
        <dbReference type="ChEBI" id="CHEBI:143892"/>
    </reaction>
</comment>
<comment type="catalytic activity">
    <reaction evidence="1">
        <text>an N-(acyl)-sphingosylphosphoethanolamine = an N-(acyl)-sphingosyl-1,3-cyclic phosphate + ethanolamine</text>
        <dbReference type="Rhea" id="RHEA:60648"/>
        <dbReference type="ChEBI" id="CHEBI:57603"/>
        <dbReference type="ChEBI" id="CHEBI:143891"/>
        <dbReference type="ChEBI" id="CHEBI:143892"/>
    </reaction>
</comment>
<comment type="catalytic activity">
    <reaction evidence="1">
        <text>a 1-acyl-sn-glycero-3-phosphocholine = a 1-acyl-sn-glycero-2,3-cyclic phosphate + choline</text>
        <dbReference type="Rhea" id="RHEA:60700"/>
        <dbReference type="ChEBI" id="CHEBI:15354"/>
        <dbReference type="ChEBI" id="CHEBI:58168"/>
        <dbReference type="ChEBI" id="CHEBI:143947"/>
    </reaction>
</comment>
<comment type="catalytic activity">
    <reaction evidence="1">
        <text>a 1-acyl-sn-glycero-3-phosphoethanolamine = a 1-acyl-sn-glycero-2,3-cyclic phosphate + ethanolamine</text>
        <dbReference type="Rhea" id="RHEA:60704"/>
        <dbReference type="ChEBI" id="CHEBI:57603"/>
        <dbReference type="ChEBI" id="CHEBI:64381"/>
        <dbReference type="ChEBI" id="CHEBI:143947"/>
    </reaction>
</comment>
<comment type="cofactor">
    <cofactor evidence="5">
        <name>Mg(2+)</name>
        <dbReference type="ChEBI" id="CHEBI:18420"/>
    </cofactor>
    <text evidence="5">Binds 1 Mg(2+) ion per subunit.</text>
</comment>
<comment type="subcellular location">
    <subcellularLocation>
        <location evidence="7">Secreted</location>
    </subcellularLocation>
</comment>
<comment type="tissue specificity">
    <text evidence="7">Expressed by the venom gland.</text>
</comment>
<comment type="PTM">
    <text evidence="3">Contains 2 disulfide bonds.</text>
</comment>
<comment type="similarity">
    <text evidence="6">Belongs to the arthropod phospholipase D family. Class II subfamily.</text>
</comment>
<comment type="caution">
    <text evidence="1 2 4">The most common activity assay for dermonecrotic toxins detects enzymatic activity by monitoring choline release from substrate. Liberation of choline from sphingomyelin (SM) or lysophosphatidylcholine (LPC) is commonly assumed to result from substrate hydrolysis, giving either ceramide-1-phosphate (C1P) or lysophosphatidic acid (LPA), respectively, as a second product. However, two studies from Lajoie and colleagues (2013 and 2015) report the observation of exclusive formation of cyclic phosphate products as second products, resulting from intramolecular transphosphatidylation. Cyclic phosphates have vastly different biological properties from their monoester counterparts, and they may be relevant to the pathology of brown spider envenomation.</text>
</comment>
<proteinExistence type="inferred from homology"/>
<feature type="chain" id="PRO_0000279553" description="Dermonecrotic toxin LarSicTox-alphaI-1">
    <location>
        <begin position="1" status="less than"/>
        <end position="161"/>
    </location>
</feature>
<feature type="non-terminal residue">
    <location>
        <position position="1"/>
    </location>
</feature>
<reference key="1">
    <citation type="journal article" date="2005" name="Toxicon">
        <title>Sphingomyelinase D from venoms of Loxosceles spiders: evolutionary insights from cDNA sequences and gene structure.</title>
        <authorList>
            <person name="Binford G.J."/>
            <person name="Cordes M.H.J."/>
            <person name="Wells M.A."/>
        </authorList>
    </citation>
    <scope>NUCLEOTIDE SEQUENCE [GENOMIC DNA]</scope>
</reference>
<accession>Q7Z1N0</accession>
<protein>
    <recommendedName>
        <fullName>Dermonecrotic toxin LarSicTox-alphaI-1</fullName>
        <ecNumber evidence="4">4.6.1.-</ecNumber>
    </recommendedName>
    <alternativeName>
        <fullName>Phospholipase D</fullName>
        <shortName>PLD</shortName>
    </alternativeName>
    <alternativeName>
        <fullName>Sphingomyelin phosphodiesterase D</fullName>
        <shortName>SMD</shortName>
        <shortName>SMase D</shortName>
        <shortName>Sphingomyelinase D</shortName>
    </alternativeName>
</protein>